<proteinExistence type="inferred from homology"/>
<organism>
    <name type="scientific">Pelobacter propionicus (strain DSM 2379 / NBRC 103807 / OttBd1)</name>
    <dbReference type="NCBI Taxonomy" id="338966"/>
    <lineage>
        <taxon>Bacteria</taxon>
        <taxon>Pseudomonadati</taxon>
        <taxon>Thermodesulfobacteriota</taxon>
        <taxon>Desulfuromonadia</taxon>
        <taxon>Desulfuromonadales</taxon>
        <taxon>Desulfuromonadaceae</taxon>
        <taxon>Pelobacter</taxon>
    </lineage>
</organism>
<name>HEM1_PELPD</name>
<gene>
    <name evidence="1" type="primary">hemA</name>
    <name type="ordered locus">Ppro_3377</name>
</gene>
<reference key="1">
    <citation type="submission" date="2006-10" db="EMBL/GenBank/DDBJ databases">
        <title>Complete sequence of chromosome of Pelobacter propionicus DSM 2379.</title>
        <authorList>
            <consortium name="US DOE Joint Genome Institute"/>
            <person name="Copeland A."/>
            <person name="Lucas S."/>
            <person name="Lapidus A."/>
            <person name="Barry K."/>
            <person name="Detter J.C."/>
            <person name="Glavina del Rio T."/>
            <person name="Hammon N."/>
            <person name="Israni S."/>
            <person name="Dalin E."/>
            <person name="Tice H."/>
            <person name="Pitluck S."/>
            <person name="Saunders E."/>
            <person name="Brettin T."/>
            <person name="Bruce D."/>
            <person name="Han C."/>
            <person name="Tapia R."/>
            <person name="Schmutz J."/>
            <person name="Larimer F."/>
            <person name="Land M."/>
            <person name="Hauser L."/>
            <person name="Kyrpides N."/>
            <person name="Kim E."/>
            <person name="Lovley D."/>
            <person name="Richardson P."/>
        </authorList>
    </citation>
    <scope>NUCLEOTIDE SEQUENCE [LARGE SCALE GENOMIC DNA]</scope>
    <source>
        <strain>DSM 2379 / NBRC 103807 / OttBd1</strain>
    </source>
</reference>
<evidence type="ECO:0000255" key="1">
    <source>
        <dbReference type="HAMAP-Rule" id="MF_00087"/>
    </source>
</evidence>
<feature type="chain" id="PRO_1000004660" description="Glutamyl-tRNA reductase">
    <location>
        <begin position="1"/>
        <end position="436"/>
    </location>
</feature>
<feature type="active site" description="Nucleophile" evidence="1">
    <location>
        <position position="50"/>
    </location>
</feature>
<feature type="binding site" evidence="1">
    <location>
        <begin position="49"/>
        <end position="52"/>
    </location>
    <ligand>
        <name>substrate</name>
    </ligand>
</feature>
<feature type="binding site" evidence="1">
    <location>
        <position position="109"/>
    </location>
    <ligand>
        <name>substrate</name>
    </ligand>
</feature>
<feature type="binding site" evidence="1">
    <location>
        <begin position="114"/>
        <end position="116"/>
    </location>
    <ligand>
        <name>substrate</name>
    </ligand>
</feature>
<feature type="binding site" evidence="1">
    <location>
        <position position="120"/>
    </location>
    <ligand>
        <name>substrate</name>
    </ligand>
</feature>
<feature type="binding site" evidence="1">
    <location>
        <begin position="189"/>
        <end position="194"/>
    </location>
    <ligand>
        <name>NADP(+)</name>
        <dbReference type="ChEBI" id="CHEBI:58349"/>
    </ligand>
</feature>
<feature type="site" description="Important for activity" evidence="1">
    <location>
        <position position="99"/>
    </location>
</feature>
<sequence>MNIIVVGLSHKTAPVEVRERVAFSPNLIERPLRELVSLDDISEGVIVSTCNRVEIYATTHDIAGGTARIKRFLADHHRIPLESLEQYLYSYHSEAAIRHVFRVASSLDSMVVGEPQILGQIKTAYGYAAEYRTSGTILNRFLHKAFSVAKRVRTETRIASSAVSVAFAAVELARKILGDLSGKTVMLIGAGEMCELAAKHFLTSGARGLLVANRTFAKGERLAAEFGGEAIPFEELFQELHRADIVLSSTGAPHTIIAPRDVEAVVKRRKFKPMFFIDIAVPRDIDPRVNDLESAYLFTVDDLQEIVEANMAQRNQEASKGEEIVEQEIGQFHCWLSSLESTPTIVALRARFEEIRRAELEKTLCGWKDLSPEAEKRLEIMTLSIMNKLLHTPTAVLKRAGQGGRTDLYTDALRQLFDLQTSRQDDDELELELEEE</sequence>
<dbReference type="EC" id="1.2.1.70" evidence="1"/>
<dbReference type="EMBL" id="CP000482">
    <property type="protein sequence ID" value="ABL00970.1"/>
    <property type="molecule type" value="Genomic_DNA"/>
</dbReference>
<dbReference type="RefSeq" id="WP_011737186.1">
    <property type="nucleotide sequence ID" value="NC_008609.1"/>
</dbReference>
<dbReference type="SMR" id="A1AUE9"/>
<dbReference type="STRING" id="338966.Ppro_3377"/>
<dbReference type="KEGG" id="ppd:Ppro_3377"/>
<dbReference type="eggNOG" id="COG0373">
    <property type="taxonomic scope" value="Bacteria"/>
</dbReference>
<dbReference type="HOGENOM" id="CLU_035113_2_2_7"/>
<dbReference type="OrthoDB" id="110209at2"/>
<dbReference type="UniPathway" id="UPA00251">
    <property type="reaction ID" value="UER00316"/>
</dbReference>
<dbReference type="Proteomes" id="UP000006732">
    <property type="component" value="Chromosome"/>
</dbReference>
<dbReference type="GO" id="GO:0008883">
    <property type="term" value="F:glutamyl-tRNA reductase activity"/>
    <property type="evidence" value="ECO:0007669"/>
    <property type="project" value="UniProtKB-UniRule"/>
</dbReference>
<dbReference type="GO" id="GO:0050661">
    <property type="term" value="F:NADP binding"/>
    <property type="evidence" value="ECO:0007669"/>
    <property type="project" value="InterPro"/>
</dbReference>
<dbReference type="GO" id="GO:0019353">
    <property type="term" value="P:protoporphyrinogen IX biosynthetic process from glutamate"/>
    <property type="evidence" value="ECO:0007669"/>
    <property type="project" value="TreeGrafter"/>
</dbReference>
<dbReference type="CDD" id="cd05213">
    <property type="entry name" value="NAD_bind_Glutamyl_tRNA_reduct"/>
    <property type="match status" value="1"/>
</dbReference>
<dbReference type="FunFam" id="3.30.460.30:FF:000001">
    <property type="entry name" value="Glutamyl-tRNA reductase"/>
    <property type="match status" value="1"/>
</dbReference>
<dbReference type="FunFam" id="3.40.50.720:FF:000031">
    <property type="entry name" value="Glutamyl-tRNA reductase"/>
    <property type="match status" value="1"/>
</dbReference>
<dbReference type="Gene3D" id="3.30.460.30">
    <property type="entry name" value="Glutamyl-tRNA reductase, N-terminal domain"/>
    <property type="match status" value="1"/>
</dbReference>
<dbReference type="Gene3D" id="3.40.50.720">
    <property type="entry name" value="NAD(P)-binding Rossmann-like Domain"/>
    <property type="match status" value="1"/>
</dbReference>
<dbReference type="HAMAP" id="MF_00087">
    <property type="entry name" value="Glu_tRNA_reductase"/>
    <property type="match status" value="1"/>
</dbReference>
<dbReference type="InterPro" id="IPR000343">
    <property type="entry name" value="4pyrrol_synth_GluRdtase"/>
</dbReference>
<dbReference type="InterPro" id="IPR015896">
    <property type="entry name" value="4pyrrol_synth_GluRdtase_dimer"/>
</dbReference>
<dbReference type="InterPro" id="IPR015895">
    <property type="entry name" value="4pyrrol_synth_GluRdtase_N"/>
</dbReference>
<dbReference type="InterPro" id="IPR018214">
    <property type="entry name" value="GluRdtase_CS"/>
</dbReference>
<dbReference type="InterPro" id="IPR036453">
    <property type="entry name" value="GluRdtase_dimer_dom_sf"/>
</dbReference>
<dbReference type="InterPro" id="IPR036343">
    <property type="entry name" value="GluRdtase_N_sf"/>
</dbReference>
<dbReference type="InterPro" id="IPR036291">
    <property type="entry name" value="NAD(P)-bd_dom_sf"/>
</dbReference>
<dbReference type="InterPro" id="IPR006151">
    <property type="entry name" value="Shikm_DH/Glu-tRNA_Rdtase"/>
</dbReference>
<dbReference type="NCBIfam" id="TIGR01035">
    <property type="entry name" value="hemA"/>
    <property type="match status" value="1"/>
</dbReference>
<dbReference type="NCBIfam" id="NF000744">
    <property type="entry name" value="PRK00045.1-3"/>
    <property type="match status" value="1"/>
</dbReference>
<dbReference type="PANTHER" id="PTHR43013">
    <property type="entry name" value="GLUTAMYL-TRNA REDUCTASE"/>
    <property type="match status" value="1"/>
</dbReference>
<dbReference type="PANTHER" id="PTHR43013:SF1">
    <property type="entry name" value="GLUTAMYL-TRNA REDUCTASE"/>
    <property type="match status" value="1"/>
</dbReference>
<dbReference type="Pfam" id="PF00745">
    <property type="entry name" value="GlutR_dimer"/>
    <property type="match status" value="1"/>
</dbReference>
<dbReference type="Pfam" id="PF05201">
    <property type="entry name" value="GlutR_N"/>
    <property type="match status" value="1"/>
</dbReference>
<dbReference type="Pfam" id="PF01488">
    <property type="entry name" value="Shikimate_DH"/>
    <property type="match status" value="1"/>
</dbReference>
<dbReference type="PIRSF" id="PIRSF000445">
    <property type="entry name" value="4pyrrol_synth_GluRdtase"/>
    <property type="match status" value="1"/>
</dbReference>
<dbReference type="SUPFAM" id="SSF69742">
    <property type="entry name" value="Glutamyl tRNA-reductase catalytic, N-terminal domain"/>
    <property type="match status" value="1"/>
</dbReference>
<dbReference type="SUPFAM" id="SSF69075">
    <property type="entry name" value="Glutamyl tRNA-reductase dimerization domain"/>
    <property type="match status" value="1"/>
</dbReference>
<dbReference type="SUPFAM" id="SSF51735">
    <property type="entry name" value="NAD(P)-binding Rossmann-fold domains"/>
    <property type="match status" value="1"/>
</dbReference>
<dbReference type="PROSITE" id="PS00747">
    <property type="entry name" value="GLUTR"/>
    <property type="match status" value="1"/>
</dbReference>
<accession>A1AUE9</accession>
<comment type="function">
    <text evidence="1">Catalyzes the NADPH-dependent reduction of glutamyl-tRNA(Glu) to glutamate 1-semialdehyde (GSA).</text>
</comment>
<comment type="catalytic activity">
    <reaction evidence="1">
        <text>(S)-4-amino-5-oxopentanoate + tRNA(Glu) + NADP(+) = L-glutamyl-tRNA(Glu) + NADPH + H(+)</text>
        <dbReference type="Rhea" id="RHEA:12344"/>
        <dbReference type="Rhea" id="RHEA-COMP:9663"/>
        <dbReference type="Rhea" id="RHEA-COMP:9680"/>
        <dbReference type="ChEBI" id="CHEBI:15378"/>
        <dbReference type="ChEBI" id="CHEBI:57501"/>
        <dbReference type="ChEBI" id="CHEBI:57783"/>
        <dbReference type="ChEBI" id="CHEBI:58349"/>
        <dbReference type="ChEBI" id="CHEBI:78442"/>
        <dbReference type="ChEBI" id="CHEBI:78520"/>
        <dbReference type="EC" id="1.2.1.70"/>
    </reaction>
</comment>
<comment type="pathway">
    <text evidence="1">Porphyrin-containing compound metabolism; protoporphyrin-IX biosynthesis; 5-aminolevulinate from L-glutamyl-tRNA(Glu): step 1/2.</text>
</comment>
<comment type="subunit">
    <text evidence="1">Homodimer.</text>
</comment>
<comment type="domain">
    <text evidence="1">Possesses an unusual extended V-shaped dimeric structure with each monomer consisting of three distinct domains arranged along a curved 'spinal' alpha-helix. The N-terminal catalytic domain specifically recognizes the glutamate moiety of the substrate. The second domain is the NADPH-binding domain, and the third C-terminal domain is responsible for dimerization.</text>
</comment>
<comment type="miscellaneous">
    <text evidence="1">During catalysis, the active site Cys acts as a nucleophile attacking the alpha-carbonyl group of tRNA-bound glutamate with the formation of a thioester intermediate between enzyme and glutamate, and the concomitant release of tRNA(Glu). The thioester intermediate is finally reduced by direct hydride transfer from NADPH, to form the product GSA.</text>
</comment>
<comment type="similarity">
    <text evidence="1">Belongs to the glutamyl-tRNA reductase family.</text>
</comment>
<keyword id="KW-0521">NADP</keyword>
<keyword id="KW-0560">Oxidoreductase</keyword>
<keyword id="KW-0627">Porphyrin biosynthesis</keyword>
<keyword id="KW-1185">Reference proteome</keyword>
<protein>
    <recommendedName>
        <fullName evidence="1">Glutamyl-tRNA reductase</fullName>
        <shortName evidence="1">GluTR</shortName>
        <ecNumber evidence="1">1.2.1.70</ecNumber>
    </recommendedName>
</protein>